<protein>
    <recommendedName>
        <fullName evidence="1">Triosephosphate isomerase</fullName>
        <shortName evidence="1">TIM</shortName>
        <shortName evidence="1">TPI</shortName>
        <ecNumber evidence="1">5.3.1.1</ecNumber>
    </recommendedName>
    <alternativeName>
        <fullName evidence="1">Triose-phosphate isomerase</fullName>
    </alternativeName>
</protein>
<gene>
    <name evidence="1" type="primary">tpiA</name>
    <name type="ordered locus">RPE_2593</name>
</gene>
<sequence>MPAAIRALIAGNWKMNGLKAQLAEFEAMLAGAPALADKADLLVCPPATLLHAFGQKLGNGARSFAVGAQDCHANVSGAHTGDLSAEMLVDAGASAIIVGHSERRADHGETDSVVRAKAEAAWRAGAVAIVCVGETQAERDAGQTLDVVGRQLAGSLPDGATAENTVVAYEPVWAIGTGLTPTANDVEQVHKFIRDCLTKRFGGEGAAVRILYGGSVKPSNAKELMAVPEVNGALVGGASLKAADFLAIAAGCP</sequence>
<evidence type="ECO:0000255" key="1">
    <source>
        <dbReference type="HAMAP-Rule" id="MF_00147"/>
    </source>
</evidence>
<accession>Q07NF3</accession>
<name>TPIS_RHOP5</name>
<proteinExistence type="inferred from homology"/>
<organism>
    <name type="scientific">Rhodopseudomonas palustris (strain BisA53)</name>
    <dbReference type="NCBI Taxonomy" id="316055"/>
    <lineage>
        <taxon>Bacteria</taxon>
        <taxon>Pseudomonadati</taxon>
        <taxon>Pseudomonadota</taxon>
        <taxon>Alphaproteobacteria</taxon>
        <taxon>Hyphomicrobiales</taxon>
        <taxon>Nitrobacteraceae</taxon>
        <taxon>Rhodopseudomonas</taxon>
    </lineage>
</organism>
<comment type="function">
    <text evidence="1">Involved in the gluconeogenesis. Catalyzes stereospecifically the conversion of dihydroxyacetone phosphate (DHAP) to D-glyceraldehyde-3-phosphate (G3P).</text>
</comment>
<comment type="catalytic activity">
    <reaction evidence="1">
        <text>D-glyceraldehyde 3-phosphate = dihydroxyacetone phosphate</text>
        <dbReference type="Rhea" id="RHEA:18585"/>
        <dbReference type="ChEBI" id="CHEBI:57642"/>
        <dbReference type="ChEBI" id="CHEBI:59776"/>
        <dbReference type="EC" id="5.3.1.1"/>
    </reaction>
</comment>
<comment type="pathway">
    <text evidence="1">Carbohydrate biosynthesis; gluconeogenesis.</text>
</comment>
<comment type="pathway">
    <text evidence="1">Carbohydrate degradation; glycolysis; D-glyceraldehyde 3-phosphate from glycerone phosphate: step 1/1.</text>
</comment>
<comment type="subunit">
    <text evidence="1">Homodimer.</text>
</comment>
<comment type="subcellular location">
    <subcellularLocation>
        <location evidence="1">Cytoplasm</location>
    </subcellularLocation>
</comment>
<comment type="similarity">
    <text evidence="1">Belongs to the triosephosphate isomerase family.</text>
</comment>
<feature type="chain" id="PRO_0000307546" description="Triosephosphate isomerase">
    <location>
        <begin position="1"/>
        <end position="253"/>
    </location>
</feature>
<feature type="active site" description="Electrophile" evidence="1">
    <location>
        <position position="100"/>
    </location>
</feature>
<feature type="active site" description="Proton acceptor" evidence="1">
    <location>
        <position position="170"/>
    </location>
</feature>
<feature type="binding site" evidence="1">
    <location>
        <begin position="12"/>
        <end position="14"/>
    </location>
    <ligand>
        <name>substrate</name>
    </ligand>
</feature>
<feature type="binding site" evidence="1">
    <location>
        <position position="176"/>
    </location>
    <ligand>
        <name>substrate</name>
    </ligand>
</feature>
<feature type="binding site" evidence="1">
    <location>
        <position position="215"/>
    </location>
    <ligand>
        <name>substrate</name>
    </ligand>
</feature>
<feature type="binding site" evidence="1">
    <location>
        <begin position="236"/>
        <end position="237"/>
    </location>
    <ligand>
        <name>substrate</name>
    </ligand>
</feature>
<reference key="1">
    <citation type="submission" date="2006-09" db="EMBL/GenBank/DDBJ databases">
        <title>Complete sequence of Rhodopseudomonas palustris BisA53.</title>
        <authorList>
            <consortium name="US DOE Joint Genome Institute"/>
            <person name="Copeland A."/>
            <person name="Lucas S."/>
            <person name="Lapidus A."/>
            <person name="Barry K."/>
            <person name="Detter J.C."/>
            <person name="Glavina del Rio T."/>
            <person name="Hammon N."/>
            <person name="Israni S."/>
            <person name="Dalin E."/>
            <person name="Tice H."/>
            <person name="Pitluck S."/>
            <person name="Chain P."/>
            <person name="Malfatti S."/>
            <person name="Shin M."/>
            <person name="Vergez L."/>
            <person name="Schmutz J."/>
            <person name="Larimer F."/>
            <person name="Land M."/>
            <person name="Hauser L."/>
            <person name="Pelletier D.A."/>
            <person name="Kyrpides N."/>
            <person name="Kim E."/>
            <person name="Harwood C.S."/>
            <person name="Oda Y."/>
            <person name="Richardson P."/>
        </authorList>
    </citation>
    <scope>NUCLEOTIDE SEQUENCE [LARGE SCALE GENOMIC DNA]</scope>
    <source>
        <strain>BisA53</strain>
    </source>
</reference>
<keyword id="KW-0963">Cytoplasm</keyword>
<keyword id="KW-0312">Gluconeogenesis</keyword>
<keyword id="KW-0324">Glycolysis</keyword>
<keyword id="KW-0413">Isomerase</keyword>
<dbReference type="EC" id="5.3.1.1" evidence="1"/>
<dbReference type="EMBL" id="CP000463">
    <property type="protein sequence ID" value="ABJ06531.1"/>
    <property type="molecule type" value="Genomic_DNA"/>
</dbReference>
<dbReference type="SMR" id="Q07NF3"/>
<dbReference type="STRING" id="316055.RPE_2593"/>
<dbReference type="KEGG" id="rpe:RPE_2593"/>
<dbReference type="eggNOG" id="COG0149">
    <property type="taxonomic scope" value="Bacteria"/>
</dbReference>
<dbReference type="HOGENOM" id="CLU_024251_2_1_5"/>
<dbReference type="OrthoDB" id="9809429at2"/>
<dbReference type="UniPathway" id="UPA00109">
    <property type="reaction ID" value="UER00189"/>
</dbReference>
<dbReference type="UniPathway" id="UPA00138"/>
<dbReference type="GO" id="GO:0005829">
    <property type="term" value="C:cytosol"/>
    <property type="evidence" value="ECO:0007669"/>
    <property type="project" value="TreeGrafter"/>
</dbReference>
<dbReference type="GO" id="GO:0004807">
    <property type="term" value="F:triose-phosphate isomerase activity"/>
    <property type="evidence" value="ECO:0007669"/>
    <property type="project" value="UniProtKB-UniRule"/>
</dbReference>
<dbReference type="GO" id="GO:0006094">
    <property type="term" value="P:gluconeogenesis"/>
    <property type="evidence" value="ECO:0007669"/>
    <property type="project" value="UniProtKB-UniRule"/>
</dbReference>
<dbReference type="GO" id="GO:0046166">
    <property type="term" value="P:glyceraldehyde-3-phosphate biosynthetic process"/>
    <property type="evidence" value="ECO:0007669"/>
    <property type="project" value="TreeGrafter"/>
</dbReference>
<dbReference type="GO" id="GO:0019563">
    <property type="term" value="P:glycerol catabolic process"/>
    <property type="evidence" value="ECO:0007669"/>
    <property type="project" value="TreeGrafter"/>
</dbReference>
<dbReference type="GO" id="GO:0006096">
    <property type="term" value="P:glycolytic process"/>
    <property type="evidence" value="ECO:0007669"/>
    <property type="project" value="UniProtKB-UniRule"/>
</dbReference>
<dbReference type="CDD" id="cd00311">
    <property type="entry name" value="TIM"/>
    <property type="match status" value="1"/>
</dbReference>
<dbReference type="FunFam" id="3.20.20.70:FF:000016">
    <property type="entry name" value="Triosephosphate isomerase"/>
    <property type="match status" value="1"/>
</dbReference>
<dbReference type="Gene3D" id="3.20.20.70">
    <property type="entry name" value="Aldolase class I"/>
    <property type="match status" value="1"/>
</dbReference>
<dbReference type="HAMAP" id="MF_00147_B">
    <property type="entry name" value="TIM_B"/>
    <property type="match status" value="1"/>
</dbReference>
<dbReference type="InterPro" id="IPR013785">
    <property type="entry name" value="Aldolase_TIM"/>
</dbReference>
<dbReference type="InterPro" id="IPR035990">
    <property type="entry name" value="TIM_sf"/>
</dbReference>
<dbReference type="InterPro" id="IPR022896">
    <property type="entry name" value="TrioseP_Isoase_bac/euk"/>
</dbReference>
<dbReference type="InterPro" id="IPR000652">
    <property type="entry name" value="Triosephosphate_isomerase"/>
</dbReference>
<dbReference type="InterPro" id="IPR020861">
    <property type="entry name" value="Triosephosphate_isomerase_AS"/>
</dbReference>
<dbReference type="NCBIfam" id="TIGR00419">
    <property type="entry name" value="tim"/>
    <property type="match status" value="1"/>
</dbReference>
<dbReference type="PANTHER" id="PTHR21139">
    <property type="entry name" value="TRIOSEPHOSPHATE ISOMERASE"/>
    <property type="match status" value="1"/>
</dbReference>
<dbReference type="PANTHER" id="PTHR21139:SF42">
    <property type="entry name" value="TRIOSEPHOSPHATE ISOMERASE"/>
    <property type="match status" value="1"/>
</dbReference>
<dbReference type="Pfam" id="PF00121">
    <property type="entry name" value="TIM"/>
    <property type="match status" value="1"/>
</dbReference>
<dbReference type="SUPFAM" id="SSF51351">
    <property type="entry name" value="Triosephosphate isomerase (TIM)"/>
    <property type="match status" value="1"/>
</dbReference>
<dbReference type="PROSITE" id="PS00171">
    <property type="entry name" value="TIM_1"/>
    <property type="match status" value="1"/>
</dbReference>
<dbReference type="PROSITE" id="PS51440">
    <property type="entry name" value="TIM_2"/>
    <property type="match status" value="1"/>
</dbReference>